<evidence type="ECO:0000250" key="1"/>
<evidence type="ECO:0000255" key="2"/>
<evidence type="ECO:0000305" key="3"/>
<comment type="function">
    <text evidence="1">Receptor for brain injury-derived neurotrophic peptide (BINP), a synthetic 13-mer peptide.</text>
</comment>
<comment type="subcellular location">
    <subcellularLocation>
        <location evidence="3">Membrane</location>
        <topology evidence="3">Multi-pass membrane protein</topology>
    </subcellularLocation>
</comment>
<comment type="PTM">
    <text evidence="1">N-glycosylated.</text>
</comment>
<comment type="similarity">
    <text evidence="3">Belongs to the TMEM158 family.</text>
</comment>
<organism>
    <name type="scientific">Bos taurus</name>
    <name type="common">Bovine</name>
    <dbReference type="NCBI Taxonomy" id="9913"/>
    <lineage>
        <taxon>Eukaryota</taxon>
        <taxon>Metazoa</taxon>
        <taxon>Chordata</taxon>
        <taxon>Craniata</taxon>
        <taxon>Vertebrata</taxon>
        <taxon>Euteleostomi</taxon>
        <taxon>Mammalia</taxon>
        <taxon>Eutheria</taxon>
        <taxon>Laurasiatheria</taxon>
        <taxon>Artiodactyla</taxon>
        <taxon>Ruminantia</taxon>
        <taxon>Pecora</taxon>
        <taxon>Bovidae</taxon>
        <taxon>Bovinae</taxon>
        <taxon>Bos</taxon>
    </lineage>
</organism>
<proteinExistence type="evidence at transcript level"/>
<sequence>MLPLLAALLAAACPLPPARGGAVDAPGLLGAPLNASVNASSSDEPAAPRLLASAAPGAPERPEEEAAAPCNISVQRQMLSSLLVRWGRPRGFQCDLLLFSTNAHGRAFFAAAFHRVGPPLLIEHLGLAAGGAQQDLRLCVGCGWVRGRRPGRLRPTGATAGAPTALPAYPAAEPPGPLWLQGEPLHFCCLDFSLEELQGEPGWRLNRKPIESTLVACFMTLVIVVWSVAALIWPVPIIAGFLPNGMEQRRTTASAAAAAPAAVPAGTTAAAAAAAAAAAAAAAVTSGTATK</sequence>
<reference key="1">
    <citation type="submission" date="2007-02" db="EMBL/GenBank/DDBJ databases">
        <authorList>
            <consortium name="NIH - Mammalian Gene Collection (MGC) project"/>
        </authorList>
    </citation>
    <scope>NUCLEOTIDE SEQUENCE [LARGE SCALE MRNA]</scope>
    <source>
        <strain>Hereford</strain>
        <tissue>Fetal cerebellum</tissue>
    </source>
</reference>
<keyword id="KW-0325">Glycoprotein</keyword>
<keyword id="KW-0472">Membrane</keyword>
<keyword id="KW-1185">Reference proteome</keyword>
<keyword id="KW-0732">Signal</keyword>
<keyword id="KW-0812">Transmembrane</keyword>
<keyword id="KW-1133">Transmembrane helix</keyword>
<name>TM158_BOVIN</name>
<feature type="signal peptide" evidence="2">
    <location>
        <begin position="1"/>
        <end position="20"/>
    </location>
</feature>
<feature type="chain" id="PRO_0000285127" description="Transmembrane protein 158">
    <location>
        <begin position="21"/>
        <end position="291"/>
    </location>
</feature>
<feature type="transmembrane region" description="Helical" evidence="2">
    <location>
        <begin position="221"/>
        <end position="241"/>
    </location>
</feature>
<feature type="transmembrane region" description="Helical" evidence="2">
    <location>
        <begin position="261"/>
        <end position="281"/>
    </location>
</feature>
<feature type="glycosylation site" description="N-linked (GlcNAc...) asparagine" evidence="2">
    <location>
        <position position="71"/>
    </location>
</feature>
<gene>
    <name type="primary">TMEM158</name>
    <name type="synonym">RIS1</name>
</gene>
<dbReference type="EMBL" id="BC133460">
    <property type="protein sequence ID" value="AAI33461.1"/>
    <property type="molecule type" value="mRNA"/>
</dbReference>
<dbReference type="RefSeq" id="NP_001075095.1">
    <property type="nucleotide sequence ID" value="NM_001081626.1"/>
</dbReference>
<dbReference type="SMR" id="A2VDX9"/>
<dbReference type="FunCoup" id="A2VDX9">
    <property type="interactions" value="5"/>
</dbReference>
<dbReference type="STRING" id="9913.ENSBTAP00000041835"/>
<dbReference type="GlyCosmos" id="A2VDX9">
    <property type="glycosylation" value="1 site, No reported glycans"/>
</dbReference>
<dbReference type="GlyGen" id="A2VDX9">
    <property type="glycosylation" value="1 site"/>
</dbReference>
<dbReference type="PaxDb" id="9913-ENSBTAP00000041835"/>
<dbReference type="Ensembl" id="ENSBTAT00000044329.5">
    <property type="protein sequence ID" value="ENSBTAP00000041835.3"/>
    <property type="gene ID" value="ENSBTAG00000031287.5"/>
</dbReference>
<dbReference type="GeneID" id="788085"/>
<dbReference type="KEGG" id="bta:788085"/>
<dbReference type="CTD" id="25907"/>
<dbReference type="VEuPathDB" id="HostDB:ENSBTAG00000031287"/>
<dbReference type="VGNC" id="VGNC:99741">
    <property type="gene designation" value="TMEM158"/>
</dbReference>
<dbReference type="eggNOG" id="ENOG502RYJ7">
    <property type="taxonomic scope" value="Eukaryota"/>
</dbReference>
<dbReference type="GeneTree" id="ENSGT00390000009719"/>
<dbReference type="HOGENOM" id="CLU_085099_0_0_1"/>
<dbReference type="InParanoid" id="A2VDX9"/>
<dbReference type="OMA" id="ACLPPCQ"/>
<dbReference type="OrthoDB" id="9426648at2759"/>
<dbReference type="TreeFam" id="TF339241"/>
<dbReference type="Proteomes" id="UP000009136">
    <property type="component" value="Chromosome 22"/>
</dbReference>
<dbReference type="Bgee" id="ENSBTAG00000031287">
    <property type="expression patterns" value="Expressed in myometrium and 96 other cell types or tissues"/>
</dbReference>
<dbReference type="GO" id="GO:0016020">
    <property type="term" value="C:membrane"/>
    <property type="evidence" value="ECO:0007669"/>
    <property type="project" value="UniProtKB-SubCell"/>
</dbReference>
<dbReference type="GO" id="GO:0042277">
    <property type="term" value="F:peptide binding"/>
    <property type="evidence" value="ECO:0000318"/>
    <property type="project" value="GO_Central"/>
</dbReference>
<dbReference type="InterPro" id="IPR038962">
    <property type="entry name" value="TMEM158"/>
</dbReference>
<dbReference type="PANTHER" id="PTHR38324">
    <property type="entry name" value="TRANSMEMBRANE PROTEIN 158"/>
    <property type="match status" value="1"/>
</dbReference>
<dbReference type="PANTHER" id="PTHR38324:SF1">
    <property type="entry name" value="TRANSMEMBRANE PROTEIN 158"/>
    <property type="match status" value="1"/>
</dbReference>
<protein>
    <recommendedName>
        <fullName>Transmembrane protein 158</fullName>
    </recommendedName>
    <alternativeName>
        <fullName>Ras-induced senescence protein 1</fullName>
    </alternativeName>
</protein>
<accession>A2VDX9</accession>